<protein>
    <recommendedName>
        <fullName evidence="1">3-hydroxyacyl-[acyl-carrier-protein] dehydratase FabZ</fullName>
        <ecNumber evidence="1">4.2.1.59</ecNumber>
    </recommendedName>
    <alternativeName>
        <fullName evidence="1">(3R)-hydroxymyristoyl-[acyl-carrier-protein] dehydratase</fullName>
        <shortName evidence="1">(3R)-hydroxymyristoyl-ACP dehydrase</shortName>
    </alternativeName>
    <alternativeName>
        <fullName evidence="1">Beta-hydroxyacyl-ACP dehydratase</fullName>
    </alternativeName>
</protein>
<name>FABZ_ANAMM</name>
<keyword id="KW-0963">Cytoplasm</keyword>
<keyword id="KW-0441">Lipid A biosynthesis</keyword>
<keyword id="KW-0444">Lipid biosynthesis</keyword>
<keyword id="KW-0443">Lipid metabolism</keyword>
<keyword id="KW-0456">Lyase</keyword>
<comment type="function">
    <text evidence="1">Involved in unsaturated fatty acids biosynthesis. Catalyzes the dehydration of short chain beta-hydroxyacyl-ACPs and long chain saturated and unsaturated beta-hydroxyacyl-ACPs.</text>
</comment>
<comment type="catalytic activity">
    <reaction evidence="1">
        <text>a (3R)-hydroxyacyl-[ACP] = a (2E)-enoyl-[ACP] + H2O</text>
        <dbReference type="Rhea" id="RHEA:13097"/>
        <dbReference type="Rhea" id="RHEA-COMP:9925"/>
        <dbReference type="Rhea" id="RHEA-COMP:9945"/>
        <dbReference type="ChEBI" id="CHEBI:15377"/>
        <dbReference type="ChEBI" id="CHEBI:78784"/>
        <dbReference type="ChEBI" id="CHEBI:78827"/>
        <dbReference type="EC" id="4.2.1.59"/>
    </reaction>
</comment>
<comment type="subcellular location">
    <subcellularLocation>
        <location evidence="1">Cytoplasm</location>
    </subcellularLocation>
</comment>
<comment type="similarity">
    <text evidence="1">Belongs to the thioester dehydratase family. FabZ subfamily.</text>
</comment>
<sequence length="147" mass="16314">MTMALDHKQIMRMLPHSYPFLLVDRVLECIPGKSIVALKNVTFNEPFFVGHFRDNPVMPGVLIIESMAQSSMLCVVSDREGDEASGNRSVYFMSIDGAKFRRVVVPGDTLTIKSAVIHMRGTTCKFQCHAYVGDELASEAQILAMMG</sequence>
<reference key="1">
    <citation type="journal article" date="2005" name="Proc. Natl. Acad. Sci. U.S.A.">
        <title>Complete genome sequencing of Anaplasma marginale reveals that the surface is skewed to two superfamilies of outer membrane proteins.</title>
        <authorList>
            <person name="Brayton K.A."/>
            <person name="Kappmeyer L.S."/>
            <person name="Herndon D.R."/>
            <person name="Dark M.J."/>
            <person name="Tibbals D.L."/>
            <person name="Palmer G.H."/>
            <person name="McGuire T.C."/>
            <person name="Knowles D.P. Jr."/>
        </authorList>
    </citation>
    <scope>NUCLEOTIDE SEQUENCE [LARGE SCALE GENOMIC DNA]</scope>
    <source>
        <strain>St. Maries</strain>
    </source>
</reference>
<proteinExistence type="inferred from homology"/>
<accession>Q5P9S6</accession>
<feature type="chain" id="PRO_0000091630" description="3-hydroxyacyl-[acyl-carrier-protein] dehydratase FabZ">
    <location>
        <begin position="1"/>
        <end position="147"/>
    </location>
</feature>
<feature type="active site" evidence="1">
    <location>
        <position position="51"/>
    </location>
</feature>
<gene>
    <name evidence="1" type="primary">fabZ</name>
    <name type="ordered locus">AM1098</name>
</gene>
<evidence type="ECO:0000255" key="1">
    <source>
        <dbReference type="HAMAP-Rule" id="MF_00406"/>
    </source>
</evidence>
<organism>
    <name type="scientific">Anaplasma marginale (strain St. Maries)</name>
    <dbReference type="NCBI Taxonomy" id="234826"/>
    <lineage>
        <taxon>Bacteria</taxon>
        <taxon>Pseudomonadati</taxon>
        <taxon>Pseudomonadota</taxon>
        <taxon>Alphaproteobacteria</taxon>
        <taxon>Rickettsiales</taxon>
        <taxon>Anaplasmataceae</taxon>
        <taxon>Anaplasma</taxon>
    </lineage>
</organism>
<dbReference type="EC" id="4.2.1.59" evidence="1"/>
<dbReference type="EMBL" id="CP000030">
    <property type="protein sequence ID" value="AAV86954.1"/>
    <property type="molecule type" value="Genomic_DNA"/>
</dbReference>
<dbReference type="SMR" id="Q5P9S6"/>
<dbReference type="KEGG" id="ama:AM1098"/>
<dbReference type="HOGENOM" id="CLU_078912_3_0_5"/>
<dbReference type="GO" id="GO:0005737">
    <property type="term" value="C:cytoplasm"/>
    <property type="evidence" value="ECO:0007669"/>
    <property type="project" value="UniProtKB-SubCell"/>
</dbReference>
<dbReference type="GO" id="GO:0016020">
    <property type="term" value="C:membrane"/>
    <property type="evidence" value="ECO:0007669"/>
    <property type="project" value="GOC"/>
</dbReference>
<dbReference type="GO" id="GO:0019171">
    <property type="term" value="F:(3R)-hydroxyacyl-[acyl-carrier-protein] dehydratase activity"/>
    <property type="evidence" value="ECO:0007669"/>
    <property type="project" value="UniProtKB-EC"/>
</dbReference>
<dbReference type="GO" id="GO:0006633">
    <property type="term" value="P:fatty acid biosynthetic process"/>
    <property type="evidence" value="ECO:0007669"/>
    <property type="project" value="UniProtKB-UniRule"/>
</dbReference>
<dbReference type="GO" id="GO:0009245">
    <property type="term" value="P:lipid A biosynthetic process"/>
    <property type="evidence" value="ECO:0007669"/>
    <property type="project" value="UniProtKB-UniRule"/>
</dbReference>
<dbReference type="CDD" id="cd01288">
    <property type="entry name" value="FabZ"/>
    <property type="match status" value="1"/>
</dbReference>
<dbReference type="FunFam" id="3.10.129.10:FF:000001">
    <property type="entry name" value="3-hydroxyacyl-[acyl-carrier-protein] dehydratase FabZ"/>
    <property type="match status" value="1"/>
</dbReference>
<dbReference type="Gene3D" id="3.10.129.10">
    <property type="entry name" value="Hotdog Thioesterase"/>
    <property type="match status" value="1"/>
</dbReference>
<dbReference type="HAMAP" id="MF_00406">
    <property type="entry name" value="FabZ"/>
    <property type="match status" value="1"/>
</dbReference>
<dbReference type="InterPro" id="IPR013114">
    <property type="entry name" value="FabA_FabZ"/>
</dbReference>
<dbReference type="InterPro" id="IPR010084">
    <property type="entry name" value="FabZ"/>
</dbReference>
<dbReference type="InterPro" id="IPR029069">
    <property type="entry name" value="HotDog_dom_sf"/>
</dbReference>
<dbReference type="NCBIfam" id="TIGR01750">
    <property type="entry name" value="fabZ"/>
    <property type="match status" value="1"/>
</dbReference>
<dbReference type="NCBIfam" id="NF000582">
    <property type="entry name" value="PRK00006.1"/>
    <property type="match status" value="1"/>
</dbReference>
<dbReference type="PANTHER" id="PTHR30272">
    <property type="entry name" value="3-HYDROXYACYL-[ACYL-CARRIER-PROTEIN] DEHYDRATASE"/>
    <property type="match status" value="1"/>
</dbReference>
<dbReference type="PANTHER" id="PTHR30272:SF1">
    <property type="entry name" value="3-HYDROXYACYL-[ACYL-CARRIER-PROTEIN] DEHYDRATASE"/>
    <property type="match status" value="1"/>
</dbReference>
<dbReference type="Pfam" id="PF07977">
    <property type="entry name" value="FabA"/>
    <property type="match status" value="1"/>
</dbReference>
<dbReference type="SUPFAM" id="SSF54637">
    <property type="entry name" value="Thioesterase/thiol ester dehydrase-isomerase"/>
    <property type="match status" value="1"/>
</dbReference>